<evidence type="ECO:0000255" key="1">
    <source>
        <dbReference type="HAMAP-Rule" id="MF_00736"/>
    </source>
</evidence>
<evidence type="ECO:0000305" key="2"/>
<protein>
    <recommendedName>
        <fullName evidence="1">Large ribosomal subunit protein uL11</fullName>
    </recommendedName>
    <alternativeName>
        <fullName evidence="2">50S ribosomal protein L11</fullName>
    </alternativeName>
</protein>
<dbReference type="EMBL" id="AM406671">
    <property type="protein sequence ID" value="CAL98843.1"/>
    <property type="molecule type" value="Genomic_DNA"/>
</dbReference>
<dbReference type="RefSeq" id="WP_011677074.1">
    <property type="nucleotide sequence ID" value="NC_009004.1"/>
</dbReference>
<dbReference type="SMR" id="A2RNF4"/>
<dbReference type="STRING" id="416870.llmg_2277"/>
<dbReference type="GeneID" id="61110327"/>
<dbReference type="KEGG" id="llm:llmg_2277"/>
<dbReference type="eggNOG" id="COG0080">
    <property type="taxonomic scope" value="Bacteria"/>
</dbReference>
<dbReference type="HOGENOM" id="CLU_074237_2_1_9"/>
<dbReference type="OrthoDB" id="9802408at2"/>
<dbReference type="PhylomeDB" id="A2RNF4"/>
<dbReference type="Proteomes" id="UP000000364">
    <property type="component" value="Chromosome"/>
</dbReference>
<dbReference type="GO" id="GO:0022625">
    <property type="term" value="C:cytosolic large ribosomal subunit"/>
    <property type="evidence" value="ECO:0007669"/>
    <property type="project" value="TreeGrafter"/>
</dbReference>
<dbReference type="GO" id="GO:0070180">
    <property type="term" value="F:large ribosomal subunit rRNA binding"/>
    <property type="evidence" value="ECO:0007669"/>
    <property type="project" value="UniProtKB-UniRule"/>
</dbReference>
<dbReference type="GO" id="GO:0003735">
    <property type="term" value="F:structural constituent of ribosome"/>
    <property type="evidence" value="ECO:0007669"/>
    <property type="project" value="InterPro"/>
</dbReference>
<dbReference type="GO" id="GO:0006412">
    <property type="term" value="P:translation"/>
    <property type="evidence" value="ECO:0007669"/>
    <property type="project" value="UniProtKB-UniRule"/>
</dbReference>
<dbReference type="CDD" id="cd00349">
    <property type="entry name" value="Ribosomal_L11"/>
    <property type="match status" value="1"/>
</dbReference>
<dbReference type="FunFam" id="1.10.10.250:FF:000001">
    <property type="entry name" value="50S ribosomal protein L11"/>
    <property type="match status" value="1"/>
</dbReference>
<dbReference type="FunFam" id="3.30.1550.10:FF:000001">
    <property type="entry name" value="50S ribosomal protein L11"/>
    <property type="match status" value="1"/>
</dbReference>
<dbReference type="Gene3D" id="1.10.10.250">
    <property type="entry name" value="Ribosomal protein L11, C-terminal domain"/>
    <property type="match status" value="1"/>
</dbReference>
<dbReference type="Gene3D" id="3.30.1550.10">
    <property type="entry name" value="Ribosomal protein L11/L12, N-terminal domain"/>
    <property type="match status" value="1"/>
</dbReference>
<dbReference type="HAMAP" id="MF_00736">
    <property type="entry name" value="Ribosomal_uL11"/>
    <property type="match status" value="1"/>
</dbReference>
<dbReference type="InterPro" id="IPR000911">
    <property type="entry name" value="Ribosomal_uL11"/>
</dbReference>
<dbReference type="InterPro" id="IPR006519">
    <property type="entry name" value="Ribosomal_uL11_bac-typ"/>
</dbReference>
<dbReference type="InterPro" id="IPR020783">
    <property type="entry name" value="Ribosomal_uL11_C"/>
</dbReference>
<dbReference type="InterPro" id="IPR036769">
    <property type="entry name" value="Ribosomal_uL11_C_sf"/>
</dbReference>
<dbReference type="InterPro" id="IPR020784">
    <property type="entry name" value="Ribosomal_uL11_N"/>
</dbReference>
<dbReference type="InterPro" id="IPR036796">
    <property type="entry name" value="Ribosomal_uL11_N_sf"/>
</dbReference>
<dbReference type="NCBIfam" id="TIGR01632">
    <property type="entry name" value="L11_bact"/>
    <property type="match status" value="1"/>
</dbReference>
<dbReference type="PANTHER" id="PTHR11661">
    <property type="entry name" value="60S RIBOSOMAL PROTEIN L12"/>
    <property type="match status" value="1"/>
</dbReference>
<dbReference type="PANTHER" id="PTHR11661:SF1">
    <property type="entry name" value="LARGE RIBOSOMAL SUBUNIT PROTEIN UL11M"/>
    <property type="match status" value="1"/>
</dbReference>
<dbReference type="Pfam" id="PF00298">
    <property type="entry name" value="Ribosomal_L11"/>
    <property type="match status" value="1"/>
</dbReference>
<dbReference type="Pfam" id="PF03946">
    <property type="entry name" value="Ribosomal_L11_N"/>
    <property type="match status" value="1"/>
</dbReference>
<dbReference type="SMART" id="SM00649">
    <property type="entry name" value="RL11"/>
    <property type="match status" value="1"/>
</dbReference>
<dbReference type="SUPFAM" id="SSF54747">
    <property type="entry name" value="Ribosomal L11/L12e N-terminal domain"/>
    <property type="match status" value="1"/>
</dbReference>
<dbReference type="SUPFAM" id="SSF46906">
    <property type="entry name" value="Ribosomal protein L11, C-terminal domain"/>
    <property type="match status" value="1"/>
</dbReference>
<name>RL11_LACLM</name>
<proteinExistence type="inferred from homology"/>
<accession>A2RNF4</accession>
<reference key="1">
    <citation type="journal article" date="2007" name="J. Bacteriol.">
        <title>The complete genome sequence of the lactic acid bacterial paradigm Lactococcus lactis subsp. cremoris MG1363.</title>
        <authorList>
            <person name="Wegmann U."/>
            <person name="O'Connell-Motherway M."/>
            <person name="Zomer A."/>
            <person name="Buist G."/>
            <person name="Shearman C."/>
            <person name="Canchaya C."/>
            <person name="Ventura M."/>
            <person name="Goesmann A."/>
            <person name="Gasson M.J."/>
            <person name="Kuipers O.P."/>
            <person name="van Sinderen D."/>
            <person name="Kok J."/>
        </authorList>
    </citation>
    <scope>NUCLEOTIDE SEQUENCE [LARGE SCALE GENOMIC DNA]</scope>
    <source>
        <strain>MG1363</strain>
    </source>
</reference>
<feature type="chain" id="PRO_1000046199" description="Large ribosomal subunit protein uL11">
    <location>
        <begin position="1"/>
        <end position="141"/>
    </location>
</feature>
<keyword id="KW-0488">Methylation</keyword>
<keyword id="KW-0687">Ribonucleoprotein</keyword>
<keyword id="KW-0689">Ribosomal protein</keyword>
<keyword id="KW-0694">RNA-binding</keyword>
<keyword id="KW-0699">rRNA-binding</keyword>
<gene>
    <name evidence="1" type="primary">rplK</name>
    <name type="ordered locus">llmg_2277</name>
</gene>
<organism>
    <name type="scientific">Lactococcus lactis subsp. cremoris (strain MG1363)</name>
    <dbReference type="NCBI Taxonomy" id="416870"/>
    <lineage>
        <taxon>Bacteria</taxon>
        <taxon>Bacillati</taxon>
        <taxon>Bacillota</taxon>
        <taxon>Bacilli</taxon>
        <taxon>Lactobacillales</taxon>
        <taxon>Streptococcaceae</taxon>
        <taxon>Lactococcus</taxon>
        <taxon>Lactococcus cremoris subsp. cremoris</taxon>
    </lineage>
</organism>
<sequence>MAKQVEKLVKLQIPAGKATPAPPVGPALGQAGVNIMGFTKEFNARTADQAGMIIPVVISVYDDKSFTFITKTPPAAVLLKKAAGVQKGSGEPNKTKVASVTKAQIKEIAELKMPDLNAASVETAMSMIEGTAKSMGFTVTD</sequence>
<comment type="function">
    <text evidence="1">Forms part of the ribosomal stalk which helps the ribosome interact with GTP-bound translation factors.</text>
</comment>
<comment type="subunit">
    <text evidence="1">Part of the ribosomal stalk of the 50S ribosomal subunit. Interacts with L10 and the large rRNA to form the base of the stalk. L10 forms an elongated spine to which L12 dimers bind in a sequential fashion forming a multimeric L10(L12)X complex.</text>
</comment>
<comment type="PTM">
    <text evidence="1">One or more lysine residues are methylated.</text>
</comment>
<comment type="similarity">
    <text evidence="1">Belongs to the universal ribosomal protein uL11 family.</text>
</comment>